<dbReference type="EMBL" id="DS499596">
    <property type="protein sequence ID" value="EDP53423.1"/>
    <property type="molecule type" value="Genomic_DNA"/>
</dbReference>
<dbReference type="SMR" id="B0Y0F3"/>
<dbReference type="EnsemblFungi" id="EDP53423">
    <property type="protein sequence ID" value="EDP53423"/>
    <property type="gene ID" value="AFUB_045980"/>
</dbReference>
<dbReference type="VEuPathDB" id="FungiDB:AFUB_045980"/>
<dbReference type="HOGENOM" id="CLU_066247_11_3_1"/>
<dbReference type="OrthoDB" id="93171at5052"/>
<dbReference type="PhylomeDB" id="B0Y0F3"/>
<dbReference type="Proteomes" id="UP000001699">
    <property type="component" value="Unassembled WGS sequence"/>
</dbReference>
<dbReference type="GO" id="GO:0017054">
    <property type="term" value="C:negative cofactor 2 complex"/>
    <property type="evidence" value="ECO:0007669"/>
    <property type="project" value="EnsemblFungi"/>
</dbReference>
<dbReference type="GO" id="GO:0003682">
    <property type="term" value="F:chromatin binding"/>
    <property type="evidence" value="ECO:0007669"/>
    <property type="project" value="EnsemblFungi"/>
</dbReference>
<dbReference type="GO" id="GO:0001046">
    <property type="term" value="F:core promoter sequence-specific DNA binding"/>
    <property type="evidence" value="ECO:0007669"/>
    <property type="project" value="EnsemblFungi"/>
</dbReference>
<dbReference type="GO" id="GO:0046982">
    <property type="term" value="F:protein heterodimerization activity"/>
    <property type="evidence" value="ECO:0007669"/>
    <property type="project" value="InterPro"/>
</dbReference>
<dbReference type="GO" id="GO:0016251">
    <property type="term" value="F:RNA polymerase II general transcription initiation factor activity"/>
    <property type="evidence" value="ECO:0007669"/>
    <property type="project" value="TreeGrafter"/>
</dbReference>
<dbReference type="GO" id="GO:0017025">
    <property type="term" value="F:TBP-class protein binding"/>
    <property type="evidence" value="ECO:0007669"/>
    <property type="project" value="EnsemblFungi"/>
</dbReference>
<dbReference type="GO" id="GO:0003713">
    <property type="term" value="F:transcription coactivator activity"/>
    <property type="evidence" value="ECO:0007669"/>
    <property type="project" value="EnsemblFungi"/>
</dbReference>
<dbReference type="GO" id="GO:0003714">
    <property type="term" value="F:transcription corepressor activity"/>
    <property type="evidence" value="ECO:0007669"/>
    <property type="project" value="EnsemblFungi"/>
</dbReference>
<dbReference type="GO" id="GO:0034605">
    <property type="term" value="P:cellular response to heat"/>
    <property type="evidence" value="ECO:0007669"/>
    <property type="project" value="EnsemblFungi"/>
</dbReference>
<dbReference type="GO" id="GO:0017055">
    <property type="term" value="P:negative regulation of RNA polymerase II transcription preinitiation complex assembly"/>
    <property type="evidence" value="ECO:0007669"/>
    <property type="project" value="EnsemblFungi"/>
</dbReference>
<dbReference type="GO" id="GO:0016480">
    <property type="term" value="P:negative regulation of transcription by RNA polymerase III"/>
    <property type="evidence" value="ECO:0007669"/>
    <property type="project" value="EnsemblFungi"/>
</dbReference>
<dbReference type="GO" id="GO:0045944">
    <property type="term" value="P:positive regulation of transcription by RNA polymerase II"/>
    <property type="evidence" value="ECO:0007669"/>
    <property type="project" value="EnsemblFungi"/>
</dbReference>
<dbReference type="GO" id="GO:0051123">
    <property type="term" value="P:RNA polymerase II preinitiation complex assembly"/>
    <property type="evidence" value="ECO:0007669"/>
    <property type="project" value="EnsemblFungi"/>
</dbReference>
<dbReference type="CDD" id="cd22905">
    <property type="entry name" value="HFD_Dr1"/>
    <property type="match status" value="1"/>
</dbReference>
<dbReference type="FunFam" id="1.10.20.10:FF:000019">
    <property type="entry name" value="Negative cofactor 2 beta"/>
    <property type="match status" value="1"/>
</dbReference>
<dbReference type="Gene3D" id="1.10.20.10">
    <property type="entry name" value="Histone, subunit A"/>
    <property type="match status" value="1"/>
</dbReference>
<dbReference type="InterPro" id="IPR003958">
    <property type="entry name" value="CBFA_NFYB_domain"/>
</dbReference>
<dbReference type="InterPro" id="IPR009072">
    <property type="entry name" value="Histone-fold"/>
</dbReference>
<dbReference type="InterPro" id="IPR042225">
    <property type="entry name" value="Ncb2"/>
</dbReference>
<dbReference type="PANTHER" id="PTHR46138">
    <property type="entry name" value="PROTEIN DR1"/>
    <property type="match status" value="1"/>
</dbReference>
<dbReference type="PANTHER" id="PTHR46138:SF1">
    <property type="entry name" value="PROTEIN DR1"/>
    <property type="match status" value="1"/>
</dbReference>
<dbReference type="Pfam" id="PF00808">
    <property type="entry name" value="CBFD_NFYB_HMF"/>
    <property type="match status" value="1"/>
</dbReference>
<dbReference type="SUPFAM" id="SSF47113">
    <property type="entry name" value="Histone-fold"/>
    <property type="match status" value="1"/>
</dbReference>
<feature type="chain" id="PRO_0000449615" description="NCT transcriptional regulatory complex subunit B">
    <location>
        <begin position="1"/>
        <end position="142"/>
    </location>
</feature>
<organism>
    <name type="scientific">Aspergillus fumigatus (strain CBS 144.89 / FGSC A1163 / CEA10)</name>
    <name type="common">Neosartorya fumigata</name>
    <dbReference type="NCBI Taxonomy" id="451804"/>
    <lineage>
        <taxon>Eukaryota</taxon>
        <taxon>Fungi</taxon>
        <taxon>Dikarya</taxon>
        <taxon>Ascomycota</taxon>
        <taxon>Pezizomycotina</taxon>
        <taxon>Eurotiomycetes</taxon>
        <taxon>Eurotiomycetidae</taxon>
        <taxon>Eurotiales</taxon>
        <taxon>Aspergillaceae</taxon>
        <taxon>Aspergillus</taxon>
        <taxon>Aspergillus subgen. Fumigati</taxon>
    </lineage>
</organism>
<protein>
    <recommendedName>
        <fullName evidence="2">NCT transcriptional regulatory complex subunit B</fullName>
    </recommendedName>
    <alternativeName>
        <fullName evidence="2">Negative cofactor 2 B</fullName>
    </alternativeName>
</protein>
<comment type="function">
    <text evidence="1">Part of the NCT transcriptional regulatory complex that acts as a key regulator of ergosterol biosynthesis and the azole exporter cdr1B (PubMed:31969561). The NCT complex binds the promoters of genes linked to azole susceptibility, and especially represses the expression of cdr1B transporter (PubMed:31969561).</text>
</comment>
<comment type="subunit">
    <text evidence="1">Forms the NCT transcriptional regulatory complex with nctA and mot1.</text>
</comment>
<comment type="subcellular location">
    <subcellularLocation>
        <location evidence="4">Nucleus</location>
    </subcellularLocation>
</comment>
<comment type="disruption phenotype">
    <text evidence="1">Leads to a multidrug-resistance phenotype, including the azoles (itraconazole, voriconazole and posaconazole), as well as the salvage therapeutic amphotericin B and terbinafine, an agent used in the treatment of chronic and allergic disease (PubMed:31969561). Also leads to transcriptional derepression of cdr1B and its over-production (PubMed:31969561). Also results in a notable increase in the immunogenic properties of Aspergillus fumigatus, but does not result in loss of virulence (PubMed:31969561).</text>
</comment>
<comment type="similarity">
    <text evidence="3">Belongs to the NC2 beta/DR1 family.</text>
</comment>
<name>NCTB_ASPFC</name>
<proteinExistence type="evidence at protein level"/>
<gene>
    <name evidence="2" type="primary">nctB</name>
    <name type="ORF">AFUB_045980</name>
</gene>
<accession>B0Y0F3</accession>
<reference key="1">
    <citation type="journal article" date="2008" name="PLoS Genet.">
        <title>Genomic islands in the pathogenic filamentous fungus Aspergillus fumigatus.</title>
        <authorList>
            <person name="Fedorova N.D."/>
            <person name="Khaldi N."/>
            <person name="Joardar V.S."/>
            <person name="Maiti R."/>
            <person name="Amedeo P."/>
            <person name="Anderson M.J."/>
            <person name="Crabtree J."/>
            <person name="Silva J.C."/>
            <person name="Badger J.H."/>
            <person name="Albarraq A."/>
            <person name="Angiuoli S."/>
            <person name="Bussey H."/>
            <person name="Bowyer P."/>
            <person name="Cotty P.J."/>
            <person name="Dyer P.S."/>
            <person name="Egan A."/>
            <person name="Galens K."/>
            <person name="Fraser-Liggett C.M."/>
            <person name="Haas B.J."/>
            <person name="Inman J.M."/>
            <person name="Kent R."/>
            <person name="Lemieux S."/>
            <person name="Malavazi I."/>
            <person name="Orvis J."/>
            <person name="Roemer T."/>
            <person name="Ronning C.M."/>
            <person name="Sundaram J.P."/>
            <person name="Sutton G."/>
            <person name="Turner G."/>
            <person name="Venter J.C."/>
            <person name="White O.R."/>
            <person name="Whitty B.R."/>
            <person name="Youngman P."/>
            <person name="Wolfe K.H."/>
            <person name="Goldman G.H."/>
            <person name="Wortman J.R."/>
            <person name="Jiang B."/>
            <person name="Denning D.W."/>
            <person name="Nierman W.C."/>
        </authorList>
    </citation>
    <scope>NUCLEOTIDE SEQUENCE [LARGE SCALE GENOMIC DNA]</scope>
    <source>
        <strain>CBS 144.89 / FGSC A1163 / CEA10</strain>
    </source>
</reference>
<reference key="2">
    <citation type="journal article" date="2020" name="Nat. Commun.">
        <title>The negative cofactor 2 complex is a key regulator of drug resistance in Aspergillus fumigatus.</title>
        <authorList>
            <person name="Furukawa T."/>
            <person name="van Rhijn N."/>
            <person name="Fraczek M."/>
            <person name="Gsaller F."/>
            <person name="Davies E."/>
            <person name="Carr P."/>
            <person name="Gago S."/>
            <person name="Fortune-Grant R."/>
            <person name="Rahman S."/>
            <person name="Gilsenan J.M."/>
            <person name="Houlder E."/>
            <person name="Kowalski C.H."/>
            <person name="Raj S."/>
            <person name="Paul S."/>
            <person name="Cook P."/>
            <person name="Parker J.E."/>
            <person name="Kelly S."/>
            <person name="Cramer R.A."/>
            <person name="Latge J.P."/>
            <person name="Moye-Rowley S."/>
            <person name="Bignell E."/>
            <person name="Bowyer P."/>
            <person name="Bromley M.J."/>
        </authorList>
    </citation>
    <scope>FUNCTION</scope>
    <scope>DISRUPTION PHENOTYPE</scope>
    <scope>INTERACTION WITH NCTA AND MOT1</scope>
</reference>
<keyword id="KW-0238">DNA-binding</keyword>
<keyword id="KW-0539">Nucleus</keyword>
<keyword id="KW-0804">Transcription</keyword>
<keyword id="KW-0805">Transcription regulation</keyword>
<evidence type="ECO:0000269" key="1">
    <source>
    </source>
</evidence>
<evidence type="ECO:0000303" key="2">
    <source>
    </source>
</evidence>
<evidence type="ECO:0000305" key="3"/>
<evidence type="ECO:0000305" key="4">
    <source>
    </source>
</evidence>
<sequence>MSDREFSSNDDLSLPKATVQKIITEILPPSSGQTFSKDARDLLMECCVEFITLISSEANDISEKEAKKTIACEHVERALRDLGFGDYIPEVLAVAEEHKEQLKSREKKQSKMEQSGLTEEELLRQQQELFRSATEKYNAAPE</sequence>